<dbReference type="EMBL" id="X78879">
    <property type="protein sequence ID" value="CAA55479.1"/>
    <property type="molecule type" value="mRNA"/>
</dbReference>
<dbReference type="SMR" id="P47953"/>
<dbReference type="GO" id="GO:0005737">
    <property type="term" value="C:cytoplasm"/>
    <property type="evidence" value="ECO:0007669"/>
    <property type="project" value="UniProtKB-SubCell"/>
</dbReference>
<dbReference type="GO" id="GO:0005615">
    <property type="term" value="C:extracellular space"/>
    <property type="evidence" value="ECO:0007669"/>
    <property type="project" value="TreeGrafter"/>
</dbReference>
<dbReference type="GO" id="GO:0001772">
    <property type="term" value="C:immunological synapse"/>
    <property type="evidence" value="ECO:0007669"/>
    <property type="project" value="TreeGrafter"/>
</dbReference>
<dbReference type="GO" id="GO:0005681">
    <property type="term" value="C:spliceosomal complex"/>
    <property type="evidence" value="ECO:0007669"/>
    <property type="project" value="UniProtKB-KW"/>
</dbReference>
<dbReference type="GO" id="GO:0048030">
    <property type="term" value="F:disaccharide binding"/>
    <property type="evidence" value="ECO:0007669"/>
    <property type="project" value="TreeGrafter"/>
</dbReference>
<dbReference type="GO" id="GO:0019863">
    <property type="term" value="F:IgE binding"/>
    <property type="evidence" value="ECO:0007669"/>
    <property type="project" value="UniProtKB-KW"/>
</dbReference>
<dbReference type="GO" id="GO:0043236">
    <property type="term" value="F:laminin binding"/>
    <property type="evidence" value="ECO:0007669"/>
    <property type="project" value="TreeGrafter"/>
</dbReference>
<dbReference type="GO" id="GO:0030154">
    <property type="term" value="P:cell differentiation"/>
    <property type="evidence" value="ECO:0007669"/>
    <property type="project" value="UniProtKB-KW"/>
</dbReference>
<dbReference type="GO" id="GO:0048245">
    <property type="term" value="P:eosinophil chemotaxis"/>
    <property type="evidence" value="ECO:0007669"/>
    <property type="project" value="TreeGrafter"/>
</dbReference>
<dbReference type="GO" id="GO:0045087">
    <property type="term" value="P:innate immune response"/>
    <property type="evidence" value="ECO:0007669"/>
    <property type="project" value="UniProtKB-KW"/>
</dbReference>
<dbReference type="GO" id="GO:0048246">
    <property type="term" value="P:macrophage chemotaxis"/>
    <property type="evidence" value="ECO:0007669"/>
    <property type="project" value="TreeGrafter"/>
</dbReference>
<dbReference type="GO" id="GO:0002548">
    <property type="term" value="P:monocyte chemotaxis"/>
    <property type="evidence" value="ECO:0007669"/>
    <property type="project" value="TreeGrafter"/>
</dbReference>
<dbReference type="GO" id="GO:0006397">
    <property type="term" value="P:mRNA processing"/>
    <property type="evidence" value="ECO:0007669"/>
    <property type="project" value="UniProtKB-KW"/>
</dbReference>
<dbReference type="GO" id="GO:0045806">
    <property type="term" value="P:negative regulation of endocytosis"/>
    <property type="evidence" value="ECO:0007669"/>
    <property type="project" value="TreeGrafter"/>
</dbReference>
<dbReference type="GO" id="GO:2001237">
    <property type="term" value="P:negative regulation of extrinsic apoptotic signaling pathway"/>
    <property type="evidence" value="ECO:0007669"/>
    <property type="project" value="TreeGrafter"/>
</dbReference>
<dbReference type="GO" id="GO:0030593">
    <property type="term" value="P:neutrophil chemotaxis"/>
    <property type="evidence" value="ECO:0007669"/>
    <property type="project" value="TreeGrafter"/>
</dbReference>
<dbReference type="GO" id="GO:0050918">
    <property type="term" value="P:positive chemotaxis"/>
    <property type="evidence" value="ECO:0007669"/>
    <property type="project" value="TreeGrafter"/>
</dbReference>
<dbReference type="GO" id="GO:0090280">
    <property type="term" value="P:positive regulation of calcium ion import"/>
    <property type="evidence" value="ECO:0007669"/>
    <property type="project" value="TreeGrafter"/>
</dbReference>
<dbReference type="GO" id="GO:0008380">
    <property type="term" value="P:RNA splicing"/>
    <property type="evidence" value="ECO:0007669"/>
    <property type="project" value="UniProtKB-KW"/>
</dbReference>
<dbReference type="CDD" id="cd00070">
    <property type="entry name" value="GLECT"/>
    <property type="match status" value="1"/>
</dbReference>
<dbReference type="FunFam" id="2.60.120.200:FF:000023">
    <property type="entry name" value="Galectin"/>
    <property type="match status" value="1"/>
</dbReference>
<dbReference type="Gene3D" id="2.60.120.200">
    <property type="match status" value="1"/>
</dbReference>
<dbReference type="InterPro" id="IPR013320">
    <property type="entry name" value="ConA-like_dom_sf"/>
</dbReference>
<dbReference type="InterPro" id="IPR044156">
    <property type="entry name" value="Galectin-like"/>
</dbReference>
<dbReference type="InterPro" id="IPR001079">
    <property type="entry name" value="Galectin_CRD"/>
</dbReference>
<dbReference type="PANTHER" id="PTHR11346">
    <property type="entry name" value="GALECTIN"/>
    <property type="match status" value="1"/>
</dbReference>
<dbReference type="PANTHER" id="PTHR11346:SF26">
    <property type="entry name" value="GALECTIN-3"/>
    <property type="match status" value="1"/>
</dbReference>
<dbReference type="Pfam" id="PF00337">
    <property type="entry name" value="Gal-bind_lectin"/>
    <property type="match status" value="1"/>
</dbReference>
<dbReference type="SMART" id="SM00908">
    <property type="entry name" value="Gal-bind_lectin"/>
    <property type="match status" value="1"/>
</dbReference>
<dbReference type="SMART" id="SM00276">
    <property type="entry name" value="GLECT"/>
    <property type="match status" value="1"/>
</dbReference>
<dbReference type="SUPFAM" id="SSF49899">
    <property type="entry name" value="Concanavalin A-like lectins/glucanases"/>
    <property type="match status" value="1"/>
</dbReference>
<dbReference type="PROSITE" id="PS51304">
    <property type="entry name" value="GALECTIN"/>
    <property type="match status" value="1"/>
</dbReference>
<accession>P47953</accession>
<feature type="initiator methionine" description="Removed" evidence="5">
    <location>
        <position position="1"/>
    </location>
</feature>
<feature type="chain" id="PRO_0000076929" description="Galectin-3">
    <location>
        <begin position="2"/>
        <end position="245"/>
    </location>
</feature>
<feature type="repeat" description="1">
    <location>
        <begin position="35"/>
        <end position="43"/>
    </location>
</feature>
<feature type="repeat" description="2">
    <location>
        <begin position="44"/>
        <end position="52"/>
    </location>
</feature>
<feature type="repeat" description="3">
    <location>
        <begin position="53"/>
        <end position="61"/>
    </location>
</feature>
<feature type="repeat" description="4">
    <location>
        <begin position="62"/>
        <end position="70"/>
    </location>
</feature>
<feature type="repeat" description="5; approximate">
    <location>
        <begin position="71"/>
        <end position="78"/>
    </location>
</feature>
<feature type="repeat" description="6; approximate">
    <location>
        <begin position="79"/>
        <end position="88"/>
    </location>
</feature>
<feature type="repeat" description="7; approximate">
    <location>
        <begin position="89"/>
        <end position="99"/>
    </location>
</feature>
<feature type="domain" description="Galectin" evidence="6">
    <location>
        <begin position="113"/>
        <end position="243"/>
    </location>
</feature>
<feature type="region of interest" description="Disordered" evidence="7">
    <location>
        <begin position="1"/>
        <end position="30"/>
    </location>
</feature>
<feature type="region of interest" description="7 X 9 AA tandem repeats of Y-P-G-X(3)-P-[GS]-A">
    <location>
        <begin position="35"/>
        <end position="99"/>
    </location>
</feature>
<feature type="region of interest" description="Disordered" evidence="7">
    <location>
        <begin position="47"/>
        <end position="68"/>
    </location>
</feature>
<feature type="short sequence motif" description="Nuclear export signal" evidence="1">
    <location>
        <begin position="221"/>
        <end position="236"/>
    </location>
</feature>
<feature type="binding site" evidence="1">
    <location>
        <begin position="176"/>
        <end position="182"/>
    </location>
    <ligand>
        <name>a beta-D-galactoside</name>
        <dbReference type="ChEBI" id="CHEBI:28034"/>
    </ligand>
</feature>
<feature type="modified residue" description="N-acetylalanine" evidence="5">
    <location>
        <position position="2"/>
    </location>
</feature>
<feature type="modified residue" description="Phosphoserine; by CK1" evidence="5">
    <location>
        <position position="6"/>
    </location>
</feature>
<feature type="modified residue" description="Phosphoserine" evidence="4">
    <location>
        <position position="183"/>
    </location>
</feature>
<feature type="disulfide bond" description="Interchain" evidence="1">
    <location>
        <position position="168"/>
    </location>
</feature>
<gene>
    <name type="primary">LGALS3</name>
</gene>
<reference key="1">
    <citation type="journal article" date="1994" name="J. Biol. Chem.">
        <title>Structure of baby hamster kidney carbohydrate-binding protein CBP30, an S-type animal lectin.</title>
        <authorList>
            <person name="Mehul B."/>
            <person name="Bawumia S."/>
            <person name="Martin S.R."/>
            <person name="Hughes R.C."/>
        </authorList>
    </citation>
    <scope>NUCLEOTIDE SEQUENCE [MRNA]</scope>
    <source>
        <tissue>Kidney</tissue>
    </source>
</reference>
<evidence type="ECO:0000250" key="1"/>
<evidence type="ECO:0000250" key="2">
    <source>
        <dbReference type="UniProtKB" id="P08699"/>
    </source>
</evidence>
<evidence type="ECO:0000250" key="3">
    <source>
        <dbReference type="UniProtKB" id="P16110"/>
    </source>
</evidence>
<evidence type="ECO:0000250" key="4">
    <source>
        <dbReference type="UniProtKB" id="P17931"/>
    </source>
</evidence>
<evidence type="ECO:0000250" key="5">
    <source>
        <dbReference type="UniProtKB" id="P38486"/>
    </source>
</evidence>
<evidence type="ECO:0000255" key="6">
    <source>
        <dbReference type="PROSITE-ProRule" id="PRU00639"/>
    </source>
</evidence>
<evidence type="ECO:0000256" key="7">
    <source>
        <dbReference type="SAM" id="MobiDB-lite"/>
    </source>
</evidence>
<organism>
    <name type="scientific">Cricetulus longicaudatus</name>
    <name type="common">Long-tailed dwarf hamster</name>
    <dbReference type="NCBI Taxonomy" id="10030"/>
    <lineage>
        <taxon>Eukaryota</taxon>
        <taxon>Metazoa</taxon>
        <taxon>Chordata</taxon>
        <taxon>Craniata</taxon>
        <taxon>Vertebrata</taxon>
        <taxon>Euteleostomi</taxon>
        <taxon>Mammalia</taxon>
        <taxon>Eutheria</taxon>
        <taxon>Euarchontoglires</taxon>
        <taxon>Glires</taxon>
        <taxon>Rodentia</taxon>
        <taxon>Myomorpha</taxon>
        <taxon>Muroidea</taxon>
        <taxon>Cricetidae</taxon>
        <taxon>Cricetinae</taxon>
        <taxon>Cricetulus</taxon>
    </lineage>
</organism>
<name>LEG3_CRILO</name>
<comment type="function">
    <text evidence="1 4">Galactose-specific lectin which binds IgE. May mediate with the alpha-3, beta-1 integrin the stimulation by CSPG4 of endothelial cells migration. Together with DMBT1, required for terminal differentiation of columnar epithelial cells during early embryogenesis (By similarity). In the nucleus: acts as a pre-mRNA splicing factor. Involved in acute inflammatory responses including neutrophil activation and adhesion, chemoattraction of monocytes macrophages, opsonization of apoptotic neutrophils, and activation of mast cells. Together with TRIM16, coordinates the recognition of membrane damage with mobilization of the core autophagy regulators ATG16L1 and BECN1 in response to damaged endomembranes (By similarity). When secreted, interacts with NK cell-activating receptor NCR3/NKp30 acting as an inhibitory ligand which antagonizes NK cell attack (By similarity).</text>
</comment>
<comment type="subunit">
    <text evidence="2 3 4">Probably forms homo- or heterodimers. Interacts with DMBT1 (By similarity). Interacts with CD6 and ALCAM. Forms a complex with the ITGA3, ITGB1 and CSPG4. Interacts with LGALS3BP, LYPD3, ZFTRAF1 and UACA. Interacts with TRIM16; this interaction mediates autophagy of damage endomembranes. Interacts with cargo receptor TMED10; the interaction mediates the translocation from the cytoplasm into the ERGIC (endoplasmic reticulum-Golgi intermediate compartment) and thereby secretion (By similarity). Interacts with and inhibits by binding NCR3/NKp30 (By similarity).</text>
</comment>
<comment type="subcellular location">
    <subcellularLocation>
        <location evidence="4">Cytoplasm</location>
    </subcellularLocation>
    <subcellularLocation>
        <location evidence="4">Nucleus</location>
    </subcellularLocation>
    <subcellularLocation>
        <location evidence="4">Secreted</location>
    </subcellularLocation>
    <text evidence="4">Secreted by a non-classical secretory pathway and associates with the cell surface. Can be secreted; the secretion is dependent on protein unfolding and facilitated by the cargo receptor TMED10; it results in protein translocation from the cytoplasm into the ERGIC (endoplasmic reticulum-Golgi intermediate compartment) followed by vesicle entry and secretion.</text>
</comment>
<proteinExistence type="evidence at transcript level"/>
<keyword id="KW-0007">Acetylation</keyword>
<keyword id="KW-0963">Cytoplasm</keyword>
<keyword id="KW-0221">Differentiation</keyword>
<keyword id="KW-1015">Disulfide bond</keyword>
<keyword id="KW-0389">IgE-binding protein</keyword>
<keyword id="KW-0391">Immunity</keyword>
<keyword id="KW-0399">Innate immunity</keyword>
<keyword id="KW-0430">Lectin</keyword>
<keyword id="KW-0507">mRNA processing</keyword>
<keyword id="KW-0508">mRNA splicing</keyword>
<keyword id="KW-0539">Nucleus</keyword>
<keyword id="KW-0597">Phosphoprotein</keyword>
<keyword id="KW-0677">Repeat</keyword>
<keyword id="KW-0964">Secreted</keyword>
<keyword id="KW-0747">Spliceosome</keyword>
<protein>
    <recommendedName>
        <fullName>Galectin-3</fullName>
        <shortName>Gal-3</shortName>
    </recommendedName>
    <alternativeName>
        <fullName>35 kDa lectin</fullName>
    </alternativeName>
    <alternativeName>
        <fullName>CBP30</fullName>
    </alternativeName>
    <alternativeName>
        <fullName>Carbohydrate-binding protein 35</fullName>
        <shortName>CBP 35</shortName>
    </alternativeName>
    <alternativeName>
        <fullName>Galactose-specific lectin 3</fullName>
    </alternativeName>
    <alternativeName>
        <fullName>IgE-binding protein</fullName>
    </alternativeName>
    <alternativeName>
        <fullName>Laminin-binding protein</fullName>
    </alternativeName>
    <alternativeName>
        <fullName>Lectin L-29</fullName>
    </alternativeName>
    <alternativeName>
        <fullName>Mac-2 antigen</fullName>
    </alternativeName>
</protein>
<sequence>MADGFSLNDALAGSGNPNPQGWPGAWGNQPGAGGYPGASYPGAYPGQAPPGAYPGQAPPGAYPGPTAPGAYPGPAPGAYPGQPGASGAYPSAPGAYPAAGPYGAPTGALTVPYKLPLAGGVMPRMLITIMGTVKPNANRIILNFLRGNDIAFHFNPRFNENNRRVIVCNTKQDNNWGREERQSAFPFESGRPFKIQVLVEADHFKVAVNDAHLLQYNHRMKNLREINQMEISGDITLTSAAPTMI</sequence>